<sequence length="213" mass="23567">MKPYQRQFIEFALGKQVLKFGEFTLKSGRKSPYFFNAGLFNTGRDLALLGRFYAEALVDSGLEFDLLFGPAYKGIPIATTTAVALAEHHDLDLPYCFNRKEAKDHGEGGNLVGSALQGRVMLVDDVITAGTAIRESMEIIQANGATLAGVLISLDRQERGRSEISAIQEVERDYNCKVISIITLKDLIAYLEEKPEMAEHLAAVKAYREEFGV</sequence>
<dbReference type="EC" id="2.4.2.10" evidence="1"/>
<dbReference type="EMBL" id="CP000800">
    <property type="protein sequence ID" value="ABV19031.1"/>
    <property type="molecule type" value="Genomic_DNA"/>
</dbReference>
<dbReference type="RefSeq" id="WP_000806162.1">
    <property type="nucleotide sequence ID" value="NC_009801.1"/>
</dbReference>
<dbReference type="SMR" id="A7ZTJ3"/>
<dbReference type="KEGG" id="ecw:EcE24377A_4143"/>
<dbReference type="HOGENOM" id="CLU_074878_0_1_6"/>
<dbReference type="UniPathway" id="UPA00070">
    <property type="reaction ID" value="UER00119"/>
</dbReference>
<dbReference type="Proteomes" id="UP000001122">
    <property type="component" value="Chromosome"/>
</dbReference>
<dbReference type="GO" id="GO:0005737">
    <property type="term" value="C:cytoplasm"/>
    <property type="evidence" value="ECO:0007669"/>
    <property type="project" value="TreeGrafter"/>
</dbReference>
<dbReference type="GO" id="GO:0000287">
    <property type="term" value="F:magnesium ion binding"/>
    <property type="evidence" value="ECO:0007669"/>
    <property type="project" value="UniProtKB-UniRule"/>
</dbReference>
<dbReference type="GO" id="GO:0004588">
    <property type="term" value="F:orotate phosphoribosyltransferase activity"/>
    <property type="evidence" value="ECO:0007669"/>
    <property type="project" value="UniProtKB-UniRule"/>
</dbReference>
<dbReference type="GO" id="GO:0006207">
    <property type="term" value="P:'de novo' pyrimidine nucleobase biosynthetic process"/>
    <property type="evidence" value="ECO:0007669"/>
    <property type="project" value="TreeGrafter"/>
</dbReference>
<dbReference type="GO" id="GO:0044205">
    <property type="term" value="P:'de novo' UMP biosynthetic process"/>
    <property type="evidence" value="ECO:0007669"/>
    <property type="project" value="UniProtKB-UniRule"/>
</dbReference>
<dbReference type="GO" id="GO:0046132">
    <property type="term" value="P:pyrimidine ribonucleoside biosynthetic process"/>
    <property type="evidence" value="ECO:0007669"/>
    <property type="project" value="TreeGrafter"/>
</dbReference>
<dbReference type="CDD" id="cd06223">
    <property type="entry name" value="PRTases_typeI"/>
    <property type="match status" value="1"/>
</dbReference>
<dbReference type="FunFam" id="3.40.50.2020:FF:000008">
    <property type="entry name" value="Orotate phosphoribosyltransferase"/>
    <property type="match status" value="1"/>
</dbReference>
<dbReference type="Gene3D" id="3.40.50.2020">
    <property type="match status" value="1"/>
</dbReference>
<dbReference type="HAMAP" id="MF_01208">
    <property type="entry name" value="PyrE"/>
    <property type="match status" value="1"/>
</dbReference>
<dbReference type="InterPro" id="IPR023031">
    <property type="entry name" value="OPRT"/>
</dbReference>
<dbReference type="InterPro" id="IPR004467">
    <property type="entry name" value="Or_phspho_trans_dom"/>
</dbReference>
<dbReference type="InterPro" id="IPR000836">
    <property type="entry name" value="PRibTrfase_dom"/>
</dbReference>
<dbReference type="InterPro" id="IPR029057">
    <property type="entry name" value="PRTase-like"/>
</dbReference>
<dbReference type="NCBIfam" id="TIGR00336">
    <property type="entry name" value="pyrE"/>
    <property type="match status" value="1"/>
</dbReference>
<dbReference type="PANTHER" id="PTHR46683">
    <property type="entry name" value="OROTATE PHOSPHORIBOSYLTRANSFERASE 1-RELATED"/>
    <property type="match status" value="1"/>
</dbReference>
<dbReference type="PANTHER" id="PTHR46683:SF1">
    <property type="entry name" value="OROTATE PHOSPHORIBOSYLTRANSFERASE 1-RELATED"/>
    <property type="match status" value="1"/>
</dbReference>
<dbReference type="Pfam" id="PF00156">
    <property type="entry name" value="Pribosyltran"/>
    <property type="match status" value="1"/>
</dbReference>
<dbReference type="SUPFAM" id="SSF53271">
    <property type="entry name" value="PRTase-like"/>
    <property type="match status" value="1"/>
</dbReference>
<dbReference type="PROSITE" id="PS00103">
    <property type="entry name" value="PUR_PYR_PR_TRANSFER"/>
    <property type="match status" value="1"/>
</dbReference>
<comment type="function">
    <text evidence="1">Catalyzes the transfer of a ribosyl phosphate group from 5-phosphoribose 1-diphosphate to orotate, leading to the formation of orotidine monophosphate (OMP).</text>
</comment>
<comment type="catalytic activity">
    <reaction evidence="1">
        <text>orotidine 5'-phosphate + diphosphate = orotate + 5-phospho-alpha-D-ribose 1-diphosphate</text>
        <dbReference type="Rhea" id="RHEA:10380"/>
        <dbReference type="ChEBI" id="CHEBI:30839"/>
        <dbReference type="ChEBI" id="CHEBI:33019"/>
        <dbReference type="ChEBI" id="CHEBI:57538"/>
        <dbReference type="ChEBI" id="CHEBI:58017"/>
        <dbReference type="EC" id="2.4.2.10"/>
    </reaction>
</comment>
<comment type="cofactor">
    <cofactor evidence="1">
        <name>Mg(2+)</name>
        <dbReference type="ChEBI" id="CHEBI:18420"/>
    </cofactor>
</comment>
<comment type="pathway">
    <text evidence="1">Pyrimidine metabolism; UMP biosynthesis via de novo pathway; UMP from orotate: step 1/2.</text>
</comment>
<comment type="subunit">
    <text evidence="1">Homodimer.</text>
</comment>
<comment type="similarity">
    <text evidence="1">Belongs to the purine/pyrimidine phosphoribosyltransferase family. PyrE subfamily.</text>
</comment>
<reference key="1">
    <citation type="journal article" date="2008" name="J. Bacteriol.">
        <title>The pangenome structure of Escherichia coli: comparative genomic analysis of E. coli commensal and pathogenic isolates.</title>
        <authorList>
            <person name="Rasko D.A."/>
            <person name="Rosovitz M.J."/>
            <person name="Myers G.S.A."/>
            <person name="Mongodin E.F."/>
            <person name="Fricke W.F."/>
            <person name="Gajer P."/>
            <person name="Crabtree J."/>
            <person name="Sebaihia M."/>
            <person name="Thomson N.R."/>
            <person name="Chaudhuri R."/>
            <person name="Henderson I.R."/>
            <person name="Sperandio V."/>
            <person name="Ravel J."/>
        </authorList>
    </citation>
    <scope>NUCLEOTIDE SEQUENCE [LARGE SCALE GENOMIC DNA]</scope>
    <source>
        <strain>E24377A / ETEC</strain>
    </source>
</reference>
<evidence type="ECO:0000255" key="1">
    <source>
        <dbReference type="HAMAP-Rule" id="MF_01208"/>
    </source>
</evidence>
<accession>A7ZTJ3</accession>
<proteinExistence type="inferred from homology"/>
<name>PYRE_ECO24</name>
<keyword id="KW-0328">Glycosyltransferase</keyword>
<keyword id="KW-0460">Magnesium</keyword>
<keyword id="KW-0665">Pyrimidine biosynthesis</keyword>
<keyword id="KW-1185">Reference proteome</keyword>
<keyword id="KW-0808">Transferase</keyword>
<protein>
    <recommendedName>
        <fullName evidence="1">Orotate phosphoribosyltransferase</fullName>
        <shortName evidence="1">OPRT</shortName>
        <shortName evidence="1">OPRTase</shortName>
        <ecNumber evidence="1">2.4.2.10</ecNumber>
    </recommendedName>
</protein>
<gene>
    <name evidence="1" type="primary">pyrE</name>
    <name type="ordered locus">EcE24377A_4143</name>
</gene>
<feature type="chain" id="PRO_1000066227" description="Orotate phosphoribosyltransferase">
    <location>
        <begin position="1"/>
        <end position="213"/>
    </location>
</feature>
<feature type="binding site" description="in other chain" evidence="1">
    <location>
        <position position="26"/>
    </location>
    <ligand>
        <name>5-phospho-alpha-D-ribose 1-diphosphate</name>
        <dbReference type="ChEBI" id="CHEBI:58017"/>
        <note>ligand shared between dimeric partners</note>
    </ligand>
</feature>
<feature type="binding site" evidence="1">
    <location>
        <begin position="34"/>
        <end position="35"/>
    </location>
    <ligand>
        <name>orotate</name>
        <dbReference type="ChEBI" id="CHEBI:30839"/>
    </ligand>
</feature>
<feature type="binding site" description="in other chain" evidence="1">
    <location>
        <begin position="72"/>
        <end position="73"/>
    </location>
    <ligand>
        <name>5-phospho-alpha-D-ribose 1-diphosphate</name>
        <dbReference type="ChEBI" id="CHEBI:58017"/>
        <note>ligand shared between dimeric partners</note>
    </ligand>
</feature>
<feature type="binding site" evidence="1">
    <location>
        <position position="99"/>
    </location>
    <ligand>
        <name>5-phospho-alpha-D-ribose 1-diphosphate</name>
        <dbReference type="ChEBI" id="CHEBI:58017"/>
        <note>ligand shared between dimeric partners</note>
    </ligand>
</feature>
<feature type="binding site" description="in other chain" evidence="1">
    <location>
        <position position="100"/>
    </location>
    <ligand>
        <name>5-phospho-alpha-D-ribose 1-diphosphate</name>
        <dbReference type="ChEBI" id="CHEBI:58017"/>
        <note>ligand shared between dimeric partners</note>
    </ligand>
</feature>
<feature type="binding site" evidence="1">
    <location>
        <position position="103"/>
    </location>
    <ligand>
        <name>5-phospho-alpha-D-ribose 1-diphosphate</name>
        <dbReference type="ChEBI" id="CHEBI:58017"/>
        <note>ligand shared between dimeric partners</note>
    </ligand>
</feature>
<feature type="binding site" evidence="1">
    <location>
        <position position="105"/>
    </location>
    <ligand>
        <name>5-phospho-alpha-D-ribose 1-diphosphate</name>
        <dbReference type="ChEBI" id="CHEBI:58017"/>
        <note>ligand shared between dimeric partners</note>
    </ligand>
</feature>
<feature type="binding site" description="in other chain" evidence="1">
    <location>
        <begin position="124"/>
        <end position="132"/>
    </location>
    <ligand>
        <name>5-phospho-alpha-D-ribose 1-diphosphate</name>
        <dbReference type="ChEBI" id="CHEBI:58017"/>
        <note>ligand shared between dimeric partners</note>
    </ligand>
</feature>
<feature type="binding site" evidence="1">
    <location>
        <position position="128"/>
    </location>
    <ligand>
        <name>orotate</name>
        <dbReference type="ChEBI" id="CHEBI:30839"/>
    </ligand>
</feature>
<feature type="binding site" evidence="1">
    <location>
        <position position="156"/>
    </location>
    <ligand>
        <name>orotate</name>
        <dbReference type="ChEBI" id="CHEBI:30839"/>
    </ligand>
</feature>
<organism>
    <name type="scientific">Escherichia coli O139:H28 (strain E24377A / ETEC)</name>
    <dbReference type="NCBI Taxonomy" id="331111"/>
    <lineage>
        <taxon>Bacteria</taxon>
        <taxon>Pseudomonadati</taxon>
        <taxon>Pseudomonadota</taxon>
        <taxon>Gammaproteobacteria</taxon>
        <taxon>Enterobacterales</taxon>
        <taxon>Enterobacteriaceae</taxon>
        <taxon>Escherichia</taxon>
    </lineage>
</organism>